<accession>P62173</accession>
<accession>P19083</accession>
<gene>
    <name evidence="4" type="primary">glnR</name>
</gene>
<reference key="1">
    <citation type="journal article" date="1989" name="J. Biochem.">
        <title>Nucleotide sequence of the glutamine synthetase gene (glnA) and its upstream region from Bacillus cereus.</title>
        <authorList>
            <person name="Nakano Y."/>
            <person name="Kato C."/>
            <person name="Tanaka E."/>
            <person name="Kimura K."/>
            <person name="Horikoshi K."/>
        </authorList>
    </citation>
    <scope>NUCLEOTIDE SEQUENCE [GENOMIC DNA]</scope>
    <source>
        <strain>NBRC 3131</strain>
    </source>
</reference>
<reference key="2">
    <citation type="journal article" date="1991" name="J. Biochem.">
        <title>Purification and characterization of a repressor for the Bacillus cereus glnRA operon.</title>
        <authorList>
            <person name="Nakano Y."/>
            <person name="Kimura K."/>
        </authorList>
    </citation>
    <scope>PROTEIN SEQUENCE OF 1-5</scope>
    <scope>FUNCTION</scope>
    <scope>ACTIVITY REGULATION</scope>
    <scope>DNA-BINDING</scope>
    <scope>SUBUNIT</scope>
    <source>
        <strain>NBRC 3131</strain>
    </source>
</reference>
<comment type="function">
    <text evidence="1 3">Transcription repressor during nitrogen excess (PubMed:1677938). On the contrary of the MerR members, which require longer DNA sites for high-affinity binding, GlnR requires a DNA sequence of 17 nucleotides as minimal binding site (By similarity).</text>
</comment>
<comment type="activity regulation">
    <text evidence="1 5">Under conditions of nitrogen excess, the DNA binding activity of GlnR is activated by a transient interaction with feedback-inhibited GlnA (Probable). Under conditions of nitrogen-limited, GlnR is autoinhibited by its C-terminal region (By similarity).</text>
</comment>
<comment type="subunit">
    <text evidence="1 3">Homodimer under conditions of nitrogen excess (PubMed:1677938). Monomer under conditions of nitrogen-limited (By similarity). Interacts with feedback-inhibited GlnA in order to stabilizes GlnR-DNA complex (By similarity).</text>
</comment>
<comment type="induction">
    <text evidence="1">Under conditions of nitrogen-limited growth, repressed by TnrA.</text>
</comment>
<comment type="miscellaneous">
    <text evidence="1">The amino acid sequences of the N-terminal DNA binding domains of TnrA and GlnR are highly similar, and both proteins bind to DNA sequences with a common consensus sequence. In contrast, the C-terminal signal transduction domains of TnrA and GlnR have no homology.</text>
</comment>
<organism>
    <name type="scientific">Bacillus cereus</name>
    <dbReference type="NCBI Taxonomy" id="1396"/>
    <lineage>
        <taxon>Bacteria</taxon>
        <taxon>Bacillati</taxon>
        <taxon>Bacillota</taxon>
        <taxon>Bacilli</taxon>
        <taxon>Bacillales</taxon>
        <taxon>Bacillaceae</taxon>
        <taxon>Bacillus</taxon>
        <taxon>Bacillus cereus group</taxon>
    </lineage>
</organism>
<dbReference type="EMBL" id="D00513">
    <property type="protein sequence ID" value="BAA00402.1"/>
    <property type="molecule type" value="Genomic_DNA"/>
</dbReference>
<dbReference type="PIR" id="JU0076">
    <property type="entry name" value="JU0076"/>
</dbReference>
<dbReference type="RefSeq" id="WP_000656783.1">
    <property type="nucleotide sequence ID" value="NZ_WBPP01000016.1"/>
</dbReference>
<dbReference type="SMR" id="P62173"/>
<dbReference type="GeneID" id="87591128"/>
<dbReference type="eggNOG" id="COG0789">
    <property type="taxonomic scope" value="Bacteria"/>
</dbReference>
<dbReference type="OMA" id="SIVMQLT"/>
<dbReference type="OrthoDB" id="9806513at2"/>
<dbReference type="GO" id="GO:0003677">
    <property type="term" value="F:DNA binding"/>
    <property type="evidence" value="ECO:0007669"/>
    <property type="project" value="UniProtKB-KW"/>
</dbReference>
<dbReference type="GO" id="GO:0003700">
    <property type="term" value="F:DNA-binding transcription factor activity"/>
    <property type="evidence" value="ECO:0007669"/>
    <property type="project" value="InterPro"/>
</dbReference>
<dbReference type="CDD" id="cd01105">
    <property type="entry name" value="HTH_GlnR-like"/>
    <property type="match status" value="1"/>
</dbReference>
<dbReference type="FunFam" id="1.10.1660.10:FF:000005">
    <property type="entry name" value="MerR family transcriptional regulator"/>
    <property type="match status" value="1"/>
</dbReference>
<dbReference type="Gene3D" id="1.10.1660.10">
    <property type="match status" value="1"/>
</dbReference>
<dbReference type="InterPro" id="IPR009061">
    <property type="entry name" value="DNA-bd_dom_put_sf"/>
</dbReference>
<dbReference type="InterPro" id="IPR000551">
    <property type="entry name" value="MerR-type_HTH_dom"/>
</dbReference>
<dbReference type="InterPro" id="IPR047057">
    <property type="entry name" value="MerR_fam"/>
</dbReference>
<dbReference type="PANTHER" id="PTHR30204:SF65">
    <property type="entry name" value="HTH-TYPE TRANSCRIPTIONAL REGULATOR TNRA"/>
    <property type="match status" value="1"/>
</dbReference>
<dbReference type="PANTHER" id="PTHR30204">
    <property type="entry name" value="REDOX-CYCLING DRUG-SENSING TRANSCRIPTIONAL ACTIVATOR SOXR"/>
    <property type="match status" value="1"/>
</dbReference>
<dbReference type="Pfam" id="PF13411">
    <property type="entry name" value="MerR_1"/>
    <property type="match status" value="1"/>
</dbReference>
<dbReference type="SMART" id="SM00422">
    <property type="entry name" value="HTH_MERR"/>
    <property type="match status" value="1"/>
</dbReference>
<dbReference type="SUPFAM" id="SSF46955">
    <property type="entry name" value="Putative DNA-binding domain"/>
    <property type="match status" value="1"/>
</dbReference>
<dbReference type="PROSITE" id="PS00552">
    <property type="entry name" value="HTH_MERR_1"/>
    <property type="match status" value="1"/>
</dbReference>
<dbReference type="PROSITE" id="PS50937">
    <property type="entry name" value="HTH_MERR_2"/>
    <property type="match status" value="1"/>
</dbReference>
<feature type="chain" id="PRO_0000098120" description="HTH-type transcriptional regulator GlnR">
    <location>
        <begin position="1"/>
        <end position="129"/>
    </location>
</feature>
<feature type="domain" description="HTH merR-type" evidence="2">
    <location>
        <begin position="10"/>
        <end position="78"/>
    </location>
</feature>
<feature type="DNA-binding region" description="H-T-H motif" evidence="2">
    <location>
        <begin position="13"/>
        <end position="32"/>
    </location>
</feature>
<keyword id="KW-0903">Direct protein sequencing</keyword>
<keyword id="KW-0238">DNA-binding</keyword>
<keyword id="KW-0678">Repressor</keyword>
<keyword id="KW-0804">Transcription</keyword>
<keyword id="KW-0805">Transcription regulation</keyword>
<proteinExistence type="evidence at protein level"/>
<sequence>MKEDRRSAPLFPIGIVMDLTQLSARQIRYYEEHNLVSPTRTKGNRRLFSFNDVDKLLEIKDLLDQGLNMAGIKQVLLMKENQTEAVKVKEETKEISKTELRKILRDELQHTGRFNRTSLRQGDISRFFH</sequence>
<evidence type="ECO:0000250" key="1">
    <source>
        <dbReference type="UniProtKB" id="P37582"/>
    </source>
</evidence>
<evidence type="ECO:0000255" key="2">
    <source>
        <dbReference type="PROSITE-ProRule" id="PRU00254"/>
    </source>
</evidence>
<evidence type="ECO:0000269" key="3">
    <source>
    </source>
</evidence>
<evidence type="ECO:0000303" key="4">
    <source>
    </source>
</evidence>
<evidence type="ECO:0000305" key="5">
    <source>
    </source>
</evidence>
<protein>
    <recommendedName>
        <fullName evidence="4">HTH-type transcriptional regulator GlnR</fullName>
    </recommendedName>
</protein>
<name>GLNR_BACCE</name>